<sequence>MRKLVEATQAGSEASVALAPSAPIQRLQAGLHHDPFEVLGVHVQPDGSKLVRAFLPAAEAVEVAGVRMTRVPGTDCFERLLPPGTALEAHPLLTWQDKRSGAWQRLRSPYSFAPQLGEMDLYLFGEGRHFEIWKVLGARVKTVDGVTGCLFAVWAPAVLRVSVVGDFNDWDGRRHPMRCRGVSGVWELFIPGLEAGHAYKYEILGRHGERVTKTDPYARQMFLRPETTSRVPDERPYAWGDAEWLAARTRFDWQHRPMSVYEVHPGSWRRRADGSFYSWRELTAELIPYVRDLGYTHIELLPVAEHPFDASWGYQVSGYYAATARFGSPDDLRAFVDACHQAGLGVLLDWVPGHFPKDDFALARFTGEPLYEHADPRRGEHQDWGTLVFDFGRNEVRNFLVANALYWLEEFHIDGLRVDAVASMLYLDYSRRHGEWLPNQHGGRENLEAIHFLHEVNAEVHARFPGAITIAEESTAWPAVSRPIELGGLGFSMKWNMGWMNDTLDYIEKEPVYRKYQHNQLTFSQMYAWSENFVLPLSHDEVVHLKKSLLDKMPGDRWQRFANLRLLYAWQYAHPGKKLLFMGGEFGQWNEWREAGQLDWVLLGFPEHDGIRALLRDLNRLYRDEAALHFWDFDPRGFRWIDCHDADQSVLSLVREGPDGAPPIVVLLNFTPVPRHGYRIGVPRAGAWCEVLNSDSMYYGGSNLGNGKPLYPAAVPWMGFGQSIEVTLPPLGAIFLKPCP</sequence>
<comment type="function">
    <text evidence="1">Catalyzes the formation of the alpha-1,6-glucosidic linkages in glycogen by scission of a 1,4-alpha-linked oligosaccharide from growing alpha-1,4-glucan chains and the subsequent attachment of the oligosaccharide to the alpha-1,6 position.</text>
</comment>
<comment type="catalytic activity">
    <reaction evidence="1">
        <text>Transfers a segment of a (1-&gt;4)-alpha-D-glucan chain to a primary hydroxy group in a similar glucan chain.</text>
        <dbReference type="EC" id="2.4.1.18"/>
    </reaction>
</comment>
<comment type="pathway">
    <text evidence="1">Glycan biosynthesis; glycogen biosynthesis.</text>
</comment>
<comment type="subunit">
    <text evidence="1">Monomer.</text>
</comment>
<comment type="similarity">
    <text evidence="1">Belongs to the glycosyl hydrolase 13 family. GlgB subfamily.</text>
</comment>
<organism>
    <name type="scientific">Thiobacillus denitrificans (strain ATCC 25259 / T1)</name>
    <dbReference type="NCBI Taxonomy" id="292415"/>
    <lineage>
        <taxon>Bacteria</taxon>
        <taxon>Pseudomonadati</taxon>
        <taxon>Pseudomonadota</taxon>
        <taxon>Betaproteobacteria</taxon>
        <taxon>Nitrosomonadales</taxon>
        <taxon>Thiobacillaceae</taxon>
        <taxon>Thiobacillus</taxon>
    </lineage>
</organism>
<gene>
    <name evidence="1" type="primary">glgB</name>
    <name type="ordered locus">Tbd_2058</name>
</gene>
<dbReference type="EC" id="2.4.1.18" evidence="1"/>
<dbReference type="EMBL" id="CP000116">
    <property type="protein sequence ID" value="AAZ98011.1"/>
    <property type="molecule type" value="Genomic_DNA"/>
</dbReference>
<dbReference type="RefSeq" id="WP_011312570.1">
    <property type="nucleotide sequence ID" value="NC_007404.1"/>
</dbReference>
<dbReference type="SMR" id="Q3SH78"/>
<dbReference type="STRING" id="292415.Tbd_2058"/>
<dbReference type="CAZy" id="CBM48">
    <property type="family name" value="Carbohydrate-Binding Module Family 48"/>
</dbReference>
<dbReference type="CAZy" id="GH13">
    <property type="family name" value="Glycoside Hydrolase Family 13"/>
</dbReference>
<dbReference type="KEGG" id="tbd:Tbd_2058"/>
<dbReference type="eggNOG" id="COG0296">
    <property type="taxonomic scope" value="Bacteria"/>
</dbReference>
<dbReference type="HOGENOM" id="CLU_004245_3_2_4"/>
<dbReference type="OrthoDB" id="9800174at2"/>
<dbReference type="UniPathway" id="UPA00164"/>
<dbReference type="Proteomes" id="UP000008291">
    <property type="component" value="Chromosome"/>
</dbReference>
<dbReference type="GO" id="GO:0005829">
    <property type="term" value="C:cytosol"/>
    <property type="evidence" value="ECO:0007669"/>
    <property type="project" value="TreeGrafter"/>
</dbReference>
<dbReference type="GO" id="GO:0003844">
    <property type="term" value="F:1,4-alpha-glucan branching enzyme activity"/>
    <property type="evidence" value="ECO:0007669"/>
    <property type="project" value="UniProtKB-UniRule"/>
</dbReference>
<dbReference type="GO" id="GO:0043169">
    <property type="term" value="F:cation binding"/>
    <property type="evidence" value="ECO:0007669"/>
    <property type="project" value="InterPro"/>
</dbReference>
<dbReference type="GO" id="GO:0004553">
    <property type="term" value="F:hydrolase activity, hydrolyzing O-glycosyl compounds"/>
    <property type="evidence" value="ECO:0007669"/>
    <property type="project" value="InterPro"/>
</dbReference>
<dbReference type="GO" id="GO:0005978">
    <property type="term" value="P:glycogen biosynthetic process"/>
    <property type="evidence" value="ECO:0007669"/>
    <property type="project" value="UniProtKB-UniRule"/>
</dbReference>
<dbReference type="CDD" id="cd11322">
    <property type="entry name" value="AmyAc_Glg_BE"/>
    <property type="match status" value="1"/>
</dbReference>
<dbReference type="CDD" id="cd02855">
    <property type="entry name" value="E_set_GBE_prok_N"/>
    <property type="match status" value="1"/>
</dbReference>
<dbReference type="FunFam" id="2.60.40.10:FF:000169">
    <property type="entry name" value="1,4-alpha-glucan branching enzyme GlgB"/>
    <property type="match status" value="1"/>
</dbReference>
<dbReference type="FunFam" id="2.60.40.1180:FF:000002">
    <property type="entry name" value="1,4-alpha-glucan branching enzyme GlgB"/>
    <property type="match status" value="1"/>
</dbReference>
<dbReference type="FunFam" id="3.20.20.80:FF:000003">
    <property type="entry name" value="1,4-alpha-glucan branching enzyme GlgB"/>
    <property type="match status" value="1"/>
</dbReference>
<dbReference type="Gene3D" id="3.20.20.80">
    <property type="entry name" value="Glycosidases"/>
    <property type="match status" value="1"/>
</dbReference>
<dbReference type="Gene3D" id="2.60.40.1180">
    <property type="entry name" value="Golgi alpha-mannosidase II"/>
    <property type="match status" value="1"/>
</dbReference>
<dbReference type="Gene3D" id="2.60.40.10">
    <property type="entry name" value="Immunoglobulins"/>
    <property type="match status" value="1"/>
</dbReference>
<dbReference type="HAMAP" id="MF_00685">
    <property type="entry name" value="GlgB"/>
    <property type="match status" value="1"/>
</dbReference>
<dbReference type="InterPro" id="IPR006048">
    <property type="entry name" value="A-amylase/branching_C"/>
</dbReference>
<dbReference type="InterPro" id="IPR037439">
    <property type="entry name" value="Branching_enzy"/>
</dbReference>
<dbReference type="InterPro" id="IPR006407">
    <property type="entry name" value="GlgB"/>
</dbReference>
<dbReference type="InterPro" id="IPR054169">
    <property type="entry name" value="GlgB_N"/>
</dbReference>
<dbReference type="InterPro" id="IPR044143">
    <property type="entry name" value="GlgB_N_E_set_prok"/>
</dbReference>
<dbReference type="InterPro" id="IPR006047">
    <property type="entry name" value="Glyco_hydro_13_cat_dom"/>
</dbReference>
<dbReference type="InterPro" id="IPR004193">
    <property type="entry name" value="Glyco_hydro_13_N"/>
</dbReference>
<dbReference type="InterPro" id="IPR013780">
    <property type="entry name" value="Glyco_hydro_b"/>
</dbReference>
<dbReference type="InterPro" id="IPR017853">
    <property type="entry name" value="Glycoside_hydrolase_SF"/>
</dbReference>
<dbReference type="InterPro" id="IPR013783">
    <property type="entry name" value="Ig-like_fold"/>
</dbReference>
<dbReference type="InterPro" id="IPR014756">
    <property type="entry name" value="Ig_E-set"/>
</dbReference>
<dbReference type="NCBIfam" id="TIGR01515">
    <property type="entry name" value="branching_enzym"/>
    <property type="match status" value="1"/>
</dbReference>
<dbReference type="NCBIfam" id="NF003811">
    <property type="entry name" value="PRK05402.1"/>
    <property type="match status" value="1"/>
</dbReference>
<dbReference type="NCBIfam" id="NF008967">
    <property type="entry name" value="PRK12313.1"/>
    <property type="match status" value="1"/>
</dbReference>
<dbReference type="PANTHER" id="PTHR43651">
    <property type="entry name" value="1,4-ALPHA-GLUCAN-BRANCHING ENZYME"/>
    <property type="match status" value="1"/>
</dbReference>
<dbReference type="PANTHER" id="PTHR43651:SF3">
    <property type="entry name" value="1,4-ALPHA-GLUCAN-BRANCHING ENZYME"/>
    <property type="match status" value="1"/>
</dbReference>
<dbReference type="Pfam" id="PF00128">
    <property type="entry name" value="Alpha-amylase"/>
    <property type="match status" value="2"/>
</dbReference>
<dbReference type="Pfam" id="PF02806">
    <property type="entry name" value="Alpha-amylase_C"/>
    <property type="match status" value="1"/>
</dbReference>
<dbReference type="Pfam" id="PF02922">
    <property type="entry name" value="CBM_48"/>
    <property type="match status" value="1"/>
</dbReference>
<dbReference type="Pfam" id="PF22019">
    <property type="entry name" value="GlgB_N"/>
    <property type="match status" value="1"/>
</dbReference>
<dbReference type="PIRSF" id="PIRSF000463">
    <property type="entry name" value="GlgB"/>
    <property type="match status" value="1"/>
</dbReference>
<dbReference type="SMART" id="SM00642">
    <property type="entry name" value="Aamy"/>
    <property type="match status" value="1"/>
</dbReference>
<dbReference type="SUPFAM" id="SSF51445">
    <property type="entry name" value="(Trans)glycosidases"/>
    <property type="match status" value="1"/>
</dbReference>
<dbReference type="SUPFAM" id="SSF81296">
    <property type="entry name" value="E set domains"/>
    <property type="match status" value="1"/>
</dbReference>
<dbReference type="SUPFAM" id="SSF51011">
    <property type="entry name" value="Glycosyl hydrolase domain"/>
    <property type="match status" value="1"/>
</dbReference>
<feature type="chain" id="PRO_0000260711" description="1,4-alpha-glucan branching enzyme GlgB">
    <location>
        <begin position="1"/>
        <end position="740"/>
    </location>
</feature>
<feature type="active site" description="Nucleophile" evidence="1">
    <location>
        <position position="419"/>
    </location>
</feature>
<feature type="active site" description="Proton donor" evidence="1">
    <location>
        <position position="472"/>
    </location>
</feature>
<proteinExistence type="inferred from homology"/>
<name>GLGB_THIDA</name>
<protein>
    <recommendedName>
        <fullName evidence="1">1,4-alpha-glucan branching enzyme GlgB</fullName>
        <ecNumber evidence="1">2.4.1.18</ecNumber>
    </recommendedName>
    <alternativeName>
        <fullName evidence="1">1,4-alpha-D-glucan:1,4-alpha-D-glucan 6-glucosyl-transferase</fullName>
    </alternativeName>
    <alternativeName>
        <fullName evidence="1">Alpha-(1-&gt;4)-glucan branching enzyme</fullName>
    </alternativeName>
    <alternativeName>
        <fullName evidence="1">Glycogen branching enzyme</fullName>
        <shortName evidence="1">BE</shortName>
    </alternativeName>
</protein>
<evidence type="ECO:0000255" key="1">
    <source>
        <dbReference type="HAMAP-Rule" id="MF_00685"/>
    </source>
</evidence>
<accession>Q3SH78</accession>
<keyword id="KW-0119">Carbohydrate metabolism</keyword>
<keyword id="KW-0320">Glycogen biosynthesis</keyword>
<keyword id="KW-0321">Glycogen metabolism</keyword>
<keyword id="KW-0328">Glycosyltransferase</keyword>
<keyword id="KW-1185">Reference proteome</keyword>
<keyword id="KW-0808">Transferase</keyword>
<reference key="1">
    <citation type="journal article" date="2006" name="J. Bacteriol.">
        <title>The genome sequence of the obligately chemolithoautotrophic, facultatively anaerobic bacterium Thiobacillus denitrificans.</title>
        <authorList>
            <person name="Beller H.R."/>
            <person name="Chain P.S."/>
            <person name="Letain T.E."/>
            <person name="Chakicherla A."/>
            <person name="Larimer F.W."/>
            <person name="Richardson P.M."/>
            <person name="Coleman M.A."/>
            <person name="Wood A.P."/>
            <person name="Kelly D.P."/>
        </authorList>
    </citation>
    <scope>NUCLEOTIDE SEQUENCE [LARGE SCALE GENOMIC DNA]</scope>
    <source>
        <strain>ATCC 25259 / T1</strain>
    </source>
</reference>